<organism>
    <name type="scientific">Aspergillus phoenicis</name>
    <name type="common">Aspergillus saitoi</name>
    <dbReference type="NCBI Taxonomy" id="5063"/>
    <lineage>
        <taxon>Eukaryota</taxon>
        <taxon>Fungi</taxon>
        <taxon>Dikarya</taxon>
        <taxon>Ascomycota</taxon>
        <taxon>Pezizomycotina</taxon>
        <taxon>Eurotiomycetes</taxon>
        <taxon>Eurotiomycetidae</taxon>
        <taxon>Eurotiales</taxon>
        <taxon>Aspergillaceae</taxon>
        <taxon>Aspergillus</taxon>
    </lineage>
</organism>
<gene>
    <name type="primary">pepA</name>
</gene>
<name>PEPA_ASPPH</name>
<protein>
    <recommendedName>
        <fullName evidence="10">Aspergillopepsin-1</fullName>
        <ecNumber evidence="5">3.4.23.18</ecNumber>
    </recommendedName>
    <alternativeName>
        <fullName>Aspartic protease pepA</fullName>
    </alternativeName>
    <alternativeName>
        <fullName evidence="9">Aspergillopepsin I</fullName>
    </alternativeName>
    <alternativeName>
        <fullName>Aspergillopeptidase A</fullName>
    </alternativeName>
    <alternativeName>
        <fullName>Protease type XIII</fullName>
    </alternativeName>
</protein>
<feature type="signal peptide" evidence="1">
    <location>
        <begin position="1"/>
        <end position="20"/>
    </location>
</feature>
<feature type="propeptide" id="PRO_0000025924" description="Activation peptide" evidence="7">
    <location>
        <begin position="21"/>
        <end position="69"/>
    </location>
</feature>
<feature type="chain" id="PRO_0000025925" description="Aspergillopepsin-1">
    <location>
        <begin position="70"/>
        <end position="394"/>
    </location>
</feature>
<feature type="domain" description="Peptidase A1" evidence="2">
    <location>
        <begin position="85"/>
        <end position="391"/>
    </location>
</feature>
<feature type="active site" evidence="2">
    <location>
        <position position="101"/>
    </location>
</feature>
<feature type="glycosylation site" description="O-linked (Man...) serine" evidence="3">
    <location>
        <position position="129"/>
    </location>
</feature>
<feature type="glycosylation site" description="O-linked (Man...) serine" evidence="3">
    <location>
        <position position="304"/>
    </location>
</feature>
<feature type="disulfide bond" evidence="2 3">
    <location>
        <begin position="319"/>
        <end position="354"/>
    </location>
</feature>
<feature type="mutagenesis site" description="Changes specificity toward basic substrates." evidence="7">
    <original>D</original>
    <variation>S</variation>
    <location>
        <position position="145"/>
    </location>
</feature>
<feature type="strand" evidence="11">
    <location>
        <begin position="72"/>
        <end position="78"/>
    </location>
</feature>
<feature type="turn" evidence="11">
    <location>
        <begin position="80"/>
        <end position="82"/>
    </location>
</feature>
<feature type="strand" evidence="11">
    <location>
        <begin position="85"/>
        <end position="92"/>
    </location>
</feature>
<feature type="strand" evidence="11">
    <location>
        <begin position="94"/>
        <end position="101"/>
    </location>
</feature>
<feature type="strand" evidence="11">
    <location>
        <begin position="107"/>
        <end position="110"/>
    </location>
</feature>
<feature type="helix" evidence="11">
    <location>
        <begin position="116"/>
        <end position="119"/>
    </location>
</feature>
<feature type="strand" evidence="11">
    <location>
        <begin position="138"/>
        <end position="142"/>
    </location>
</feature>
<feature type="strand" evidence="11">
    <location>
        <begin position="144"/>
        <end position="146"/>
    </location>
</feature>
<feature type="strand" evidence="11">
    <location>
        <begin position="148"/>
        <end position="160"/>
    </location>
</feature>
<feature type="strand" evidence="11">
    <location>
        <begin position="163"/>
        <end position="176"/>
    </location>
</feature>
<feature type="helix" evidence="11">
    <location>
        <begin position="178"/>
        <end position="181"/>
    </location>
</feature>
<feature type="strand" evidence="11">
    <location>
        <begin position="188"/>
        <end position="191"/>
    </location>
</feature>
<feature type="helix" evidence="11">
    <location>
        <begin position="195"/>
        <end position="197"/>
    </location>
</feature>
<feature type="strand" evidence="11">
    <location>
        <begin position="201"/>
        <end position="203"/>
    </location>
</feature>
<feature type="helix" evidence="11">
    <location>
        <begin position="208"/>
        <end position="212"/>
    </location>
</feature>
<feature type="helix" evidence="11">
    <location>
        <begin position="213"/>
        <end position="215"/>
    </location>
</feature>
<feature type="strand" evidence="11">
    <location>
        <begin position="216"/>
        <end position="226"/>
    </location>
</feature>
<feature type="strand" evidence="11">
    <location>
        <begin position="229"/>
        <end position="237"/>
    </location>
</feature>
<feature type="helix" evidence="11">
    <location>
        <begin position="240"/>
        <end position="242"/>
    </location>
</feature>
<feature type="strand" evidence="11">
    <location>
        <begin position="243"/>
        <end position="245"/>
    </location>
</feature>
<feature type="strand" evidence="11">
    <location>
        <begin position="248"/>
        <end position="251"/>
    </location>
</feature>
<feature type="strand" evidence="11">
    <location>
        <begin position="260"/>
        <end position="263"/>
    </location>
</feature>
<feature type="strand" evidence="11">
    <location>
        <begin position="265"/>
        <end position="268"/>
    </location>
</feature>
<feature type="strand" evidence="11">
    <location>
        <begin position="278"/>
        <end position="282"/>
    </location>
</feature>
<feature type="strand" evidence="11">
    <location>
        <begin position="288"/>
        <end position="291"/>
    </location>
</feature>
<feature type="helix" evidence="11">
    <location>
        <begin position="293"/>
        <end position="300"/>
    </location>
</feature>
<feature type="strand" evidence="11">
    <location>
        <begin position="310"/>
        <end position="314"/>
    </location>
</feature>
<feature type="strand" evidence="11">
    <location>
        <begin position="316"/>
        <end position="318"/>
    </location>
</feature>
<feature type="strand" evidence="11">
    <location>
        <begin position="326"/>
        <end position="330"/>
    </location>
</feature>
<feature type="strand" evidence="11">
    <location>
        <begin position="333"/>
        <end position="337"/>
    </location>
</feature>
<feature type="helix" evidence="11">
    <location>
        <begin position="339"/>
        <end position="342"/>
    </location>
</feature>
<feature type="strand" evidence="11">
    <location>
        <begin position="343"/>
        <end position="348"/>
    </location>
</feature>
<feature type="strand" evidence="11">
    <location>
        <begin position="352"/>
        <end position="360"/>
    </location>
</feature>
<feature type="turn" evidence="11">
    <location>
        <begin position="362"/>
        <end position="364"/>
    </location>
</feature>
<feature type="strand" evidence="11">
    <location>
        <begin position="366"/>
        <end position="369"/>
    </location>
</feature>
<feature type="helix" evidence="11">
    <location>
        <begin position="371"/>
        <end position="374"/>
    </location>
</feature>
<feature type="strand" evidence="11">
    <location>
        <begin position="377"/>
        <end position="382"/>
    </location>
</feature>
<feature type="turn" evidence="11">
    <location>
        <begin position="383"/>
        <end position="386"/>
    </location>
</feature>
<feature type="strand" evidence="11">
    <location>
        <begin position="387"/>
        <end position="393"/>
    </location>
</feature>
<comment type="function">
    <text evidence="4 5 8">Secreted aspartic endopeptidase that allows assimilation of proteinaceous substrates. The scissile peptide bond is attacked by a nucleophilic water molecule activated by two aspartic residues in the active site. Shows a broad primary substrate specificity. Favors hydrophobic residues at the P1 and P1' positions, but also accepts a lysine residue in the P1 position, leading to the activation of trypsinogen and chymotrypsinogen A.</text>
</comment>
<comment type="catalytic activity">
    <reaction evidence="5">
        <text>Hydrolysis of proteins with broad specificity. Generally favors hydrophobic residues in P1 and P1', but also accepts Lys in P1, which leads to activation of trypsinogen. Does not clot milk.</text>
        <dbReference type="EC" id="3.4.23.18"/>
    </reaction>
</comment>
<comment type="biophysicochemical properties">
    <phDependence>
        <text evidence="8">Optimum pH is 2.9-3.3.</text>
    </phDependence>
</comment>
<comment type="subunit">
    <text evidence="6">Monomer.</text>
</comment>
<comment type="subcellular location">
    <subcellularLocation>
        <location evidence="8">Secreted</location>
    </subcellularLocation>
</comment>
<comment type="similarity">
    <text evidence="2">Belongs to the peptidase A1 family.</text>
</comment>
<proteinExistence type="evidence at protein level"/>
<sequence length="394" mass="41298">MVVFSKTAALVLGLSTAVSAAPAPTRKGFTINQIARPANKTRTVNLPGLYARSLAKFGGTVPQSVKEAASKGSAVTTPQNNDEEYLTPVTVGKSTLHLDFDTGSADLWVFSDELPSSEQTGHDLYTPSSSATKLSGYSWDISYGDGSSASGDVYRDTVTVGGVTTNKQAVEAASKISSEFVQDTANDGLLGLAFSSINTVQPKAQTTFFDTVKSQLDSPLFAVQLKHDAPGVYDFGYIDDSKYTGSITYTDADSSQGYWGFSTDGYSIGDGSSSSSGFSAIADTGTTLILLDDEIVSAYYEQVSGAQESYEAGGYVFSCSTDLPDFTVVIGDYKAVVPGKYINYAPVSTGSSTCYGGIQSNSGLGLSILGDVFLKSQYVVFNSEGPKLGFAAQA</sequence>
<dbReference type="EC" id="3.4.23.18" evidence="5"/>
<dbReference type="EMBL" id="D25318">
    <property type="protein sequence ID" value="BAA04988.1"/>
    <property type="molecule type" value="Genomic_DNA"/>
</dbReference>
<dbReference type="PDB" id="1IBQ">
    <property type="method" value="X-ray"/>
    <property type="resolution" value="2.14 A"/>
    <property type="chains" value="A/B=70-394"/>
</dbReference>
<dbReference type="PDBsum" id="1IBQ"/>
<dbReference type="SMR" id="Q12567"/>
<dbReference type="Allergome" id="8264">
    <property type="allergen name" value="Asp sa AP"/>
</dbReference>
<dbReference type="MEROPS" id="A01.016"/>
<dbReference type="GlyCosmos" id="Q12567">
    <property type="glycosylation" value="2 sites, No reported glycans"/>
</dbReference>
<dbReference type="iPTMnet" id="Q12567"/>
<dbReference type="EvolutionaryTrace" id="Q12567"/>
<dbReference type="GO" id="GO:0005576">
    <property type="term" value="C:extracellular region"/>
    <property type="evidence" value="ECO:0007669"/>
    <property type="project" value="UniProtKB-SubCell"/>
</dbReference>
<dbReference type="GO" id="GO:0004190">
    <property type="term" value="F:aspartic-type endopeptidase activity"/>
    <property type="evidence" value="ECO:0007669"/>
    <property type="project" value="UniProtKB-KW"/>
</dbReference>
<dbReference type="GO" id="GO:0006508">
    <property type="term" value="P:proteolysis"/>
    <property type="evidence" value="ECO:0007669"/>
    <property type="project" value="UniProtKB-KW"/>
</dbReference>
<dbReference type="CDD" id="cd06097">
    <property type="entry name" value="Aspergillopepsin_like"/>
    <property type="match status" value="1"/>
</dbReference>
<dbReference type="FunFam" id="2.40.70.10:FF:000024">
    <property type="entry name" value="Endothiapepsin"/>
    <property type="match status" value="1"/>
</dbReference>
<dbReference type="FunFam" id="2.40.70.10:FF:000026">
    <property type="entry name" value="Endothiapepsin"/>
    <property type="match status" value="1"/>
</dbReference>
<dbReference type="Gene3D" id="2.40.70.10">
    <property type="entry name" value="Acid Proteases"/>
    <property type="match status" value="2"/>
</dbReference>
<dbReference type="InterPro" id="IPR001461">
    <property type="entry name" value="Aspartic_peptidase_A1"/>
</dbReference>
<dbReference type="InterPro" id="IPR001969">
    <property type="entry name" value="Aspartic_peptidase_AS"/>
</dbReference>
<dbReference type="InterPro" id="IPR034163">
    <property type="entry name" value="Aspergillopepsin-like_cat_dom"/>
</dbReference>
<dbReference type="InterPro" id="IPR033121">
    <property type="entry name" value="PEPTIDASE_A1"/>
</dbReference>
<dbReference type="InterPro" id="IPR021109">
    <property type="entry name" value="Peptidase_aspartic_dom_sf"/>
</dbReference>
<dbReference type="PANTHER" id="PTHR47966:SF2">
    <property type="entry name" value="ASPERGILLOPEPSIN-1-RELATED"/>
    <property type="match status" value="1"/>
</dbReference>
<dbReference type="PANTHER" id="PTHR47966">
    <property type="entry name" value="BETA-SITE APP-CLEAVING ENZYME, ISOFORM A-RELATED"/>
    <property type="match status" value="1"/>
</dbReference>
<dbReference type="Pfam" id="PF00026">
    <property type="entry name" value="Asp"/>
    <property type="match status" value="1"/>
</dbReference>
<dbReference type="PRINTS" id="PR00792">
    <property type="entry name" value="PEPSIN"/>
</dbReference>
<dbReference type="SUPFAM" id="SSF50630">
    <property type="entry name" value="Acid proteases"/>
    <property type="match status" value="1"/>
</dbReference>
<dbReference type="PROSITE" id="PS00141">
    <property type="entry name" value="ASP_PROTEASE"/>
    <property type="match status" value="2"/>
</dbReference>
<dbReference type="PROSITE" id="PS51767">
    <property type="entry name" value="PEPTIDASE_A1"/>
    <property type="match status" value="1"/>
</dbReference>
<evidence type="ECO:0000255" key="1"/>
<evidence type="ECO:0000255" key="2">
    <source>
        <dbReference type="PROSITE-ProRule" id="PRU01103"/>
    </source>
</evidence>
<evidence type="ECO:0000269" key="3">
    <source>
    </source>
</evidence>
<evidence type="ECO:0000269" key="4">
    <source>
    </source>
</evidence>
<evidence type="ECO:0000269" key="5">
    <source>
    </source>
</evidence>
<evidence type="ECO:0000269" key="6">
    <source>
    </source>
</evidence>
<evidence type="ECO:0000269" key="7">
    <source>
    </source>
</evidence>
<evidence type="ECO:0000269" key="8">
    <source ref="4"/>
</evidence>
<evidence type="ECO:0000303" key="9">
    <source>
    </source>
</evidence>
<evidence type="ECO:0000305" key="10"/>
<evidence type="ECO:0007829" key="11">
    <source>
        <dbReference type="PDB" id="1IBQ"/>
    </source>
</evidence>
<accession>Q12567</accession>
<reference key="1">
    <citation type="journal article" date="1994" name="Biochim. Biophys. Acta">
        <title>Primary structure of aspergillopepsin I deduced from nucleotide sequence of the gene and aspartic acid-76 is an essential active site of the enzyme for trypsinogen activation.</title>
        <authorList>
            <person name="Shintani T."/>
            <person name="Ichishima E."/>
        </authorList>
    </citation>
    <scope>NUCLEOTIDE SEQUENCE [GENOMIC DNA]</scope>
    <scope>PROTEIN SEQUENCE OF 70-91; 93-112; 134-152; 158-168; 176-194; 204-242; 249-253; 291-299; 335-339 AND 376-394</scope>
    <scope>MUTAGENESIS OF ASP-145</scope>
    <source>
        <strain>ATCC 14332 / BCRC 34164 / R-3813</strain>
    </source>
</reference>
<reference key="2">
    <citation type="journal article" date="1960" name="Biochim. Biophys. Acta">
        <title>On the activation of bovine trypsinogen by a crystallized protease from Aspergillus saitoi.</title>
        <authorList>
            <person name="Gabeloteau C."/>
            <person name="Desnuelle P."/>
        </authorList>
    </citation>
    <scope>FUNCTION</scope>
</reference>
<reference key="3">
    <citation type="journal article" date="1965" name="Nature">
        <title>Molecular weight of acid proteinase of Aspergillus saitoi.</title>
        <authorList>
            <person name="Ichishima E."/>
            <person name="Yoshida F."/>
        </authorList>
    </citation>
    <scope>SUBUNIT</scope>
</reference>
<reference key="4">
    <citation type="journal article" date="1970" name="Methods Enzymol.">
        <title>Purification and mode of assay for acid proteinase of Aspergillus saitoi.</title>
        <authorList>
            <person name="Ichishima E."/>
        </authorList>
    </citation>
    <scope>FUNCTION</scope>
    <scope>BIOPHYSICOCHEMICAL PROPERTIES</scope>
    <scope>SUBCELLULAR LOCATION</scope>
</reference>
<reference key="5">
    <citation type="journal article" date="1977" name="Biochim. Biophys. Acta">
        <title>Purification of an acid proteinase from Aspergillus saitoi and determination of peptide bond specificity.</title>
        <authorList>
            <person name="Tanaka N."/>
            <person name="Takeuchi M."/>
            <person name="Ichishima E."/>
        </authorList>
    </citation>
    <scope>FUNCTION</scope>
    <scope>CATALYTIC ACTIVITY</scope>
    <scope>SUBSTRATE SPECIFICITY</scope>
</reference>
<reference key="6">
    <citation type="journal article" date="2001" name="Acta Crystallogr. D">
        <title>Structure of aspergillopepsin I from Aspergillus phoenicis: variations of the S1'-S2 subsite in aspartic proteinases.</title>
        <authorList>
            <person name="Cho S.W."/>
            <person name="Kim N."/>
            <person name="Choi M.U."/>
            <person name="Shin W."/>
        </authorList>
    </citation>
    <scope>X-RAY CRYSTALLOGRAPHY (2.14 ANGSTROMS) OF 70-394</scope>
    <scope>DISULFIDE BOND</scope>
    <scope>GLYCOSYLATION AT SER-129 AND SER-304</scope>
</reference>
<keyword id="KW-0002">3D-structure</keyword>
<keyword id="KW-0064">Aspartyl protease</keyword>
<keyword id="KW-0903">Direct protein sequencing</keyword>
<keyword id="KW-1015">Disulfide bond</keyword>
<keyword id="KW-0325">Glycoprotein</keyword>
<keyword id="KW-0378">Hydrolase</keyword>
<keyword id="KW-0645">Protease</keyword>
<keyword id="KW-0964">Secreted</keyword>
<keyword id="KW-0732">Signal</keyword>
<keyword id="KW-0865">Zymogen</keyword>